<reference key="1">
    <citation type="journal article" date="2011" name="MBio">
        <title>Novel metabolic attributes of the genus Cyanothece, comprising a group of unicellular nitrogen-fixing Cyanobacteria.</title>
        <authorList>
            <person name="Bandyopadhyay A."/>
            <person name="Elvitigala T."/>
            <person name="Welsh E."/>
            <person name="Stockel J."/>
            <person name="Liberton M."/>
            <person name="Min H."/>
            <person name="Sherman L.A."/>
            <person name="Pakrasi H.B."/>
        </authorList>
    </citation>
    <scope>NUCLEOTIDE SEQUENCE [LARGE SCALE GENOMIC DNA]</scope>
    <source>
        <strain>PCC 8801 / RF-1</strain>
    </source>
</reference>
<proteinExistence type="inferred from homology"/>
<sequence length="92" mass="10323">MGRSLKKGPFVSDSLLTKIEKLNEKGDKQVIKTWSRASTILPQMVGHTIAVHNGKQHVPVYVSEQMVGHKLGEFAPTRTFRGHAKSDKKSRR</sequence>
<dbReference type="EMBL" id="CP001287">
    <property type="protein sequence ID" value="ACK64351.1"/>
    <property type="molecule type" value="Genomic_DNA"/>
</dbReference>
<dbReference type="RefSeq" id="WP_012593628.1">
    <property type="nucleotide sequence ID" value="NC_011726.1"/>
</dbReference>
<dbReference type="SMR" id="B7K331"/>
<dbReference type="STRING" id="41431.PCC8801_0248"/>
<dbReference type="KEGG" id="cyp:PCC8801_0248"/>
<dbReference type="eggNOG" id="COG0185">
    <property type="taxonomic scope" value="Bacteria"/>
</dbReference>
<dbReference type="HOGENOM" id="CLU_144911_0_1_3"/>
<dbReference type="OrthoDB" id="9797833at2"/>
<dbReference type="Proteomes" id="UP000008204">
    <property type="component" value="Chromosome"/>
</dbReference>
<dbReference type="GO" id="GO:0005737">
    <property type="term" value="C:cytoplasm"/>
    <property type="evidence" value="ECO:0007669"/>
    <property type="project" value="UniProtKB-ARBA"/>
</dbReference>
<dbReference type="GO" id="GO:0015935">
    <property type="term" value="C:small ribosomal subunit"/>
    <property type="evidence" value="ECO:0007669"/>
    <property type="project" value="InterPro"/>
</dbReference>
<dbReference type="GO" id="GO:0019843">
    <property type="term" value="F:rRNA binding"/>
    <property type="evidence" value="ECO:0007669"/>
    <property type="project" value="UniProtKB-UniRule"/>
</dbReference>
<dbReference type="GO" id="GO:0003735">
    <property type="term" value="F:structural constituent of ribosome"/>
    <property type="evidence" value="ECO:0007669"/>
    <property type="project" value="InterPro"/>
</dbReference>
<dbReference type="GO" id="GO:0000028">
    <property type="term" value="P:ribosomal small subunit assembly"/>
    <property type="evidence" value="ECO:0007669"/>
    <property type="project" value="TreeGrafter"/>
</dbReference>
<dbReference type="GO" id="GO:0006412">
    <property type="term" value="P:translation"/>
    <property type="evidence" value="ECO:0007669"/>
    <property type="project" value="UniProtKB-UniRule"/>
</dbReference>
<dbReference type="FunFam" id="3.30.860.10:FF:000001">
    <property type="entry name" value="30S ribosomal protein S19"/>
    <property type="match status" value="1"/>
</dbReference>
<dbReference type="Gene3D" id="3.30.860.10">
    <property type="entry name" value="30s Ribosomal Protein S19, Chain A"/>
    <property type="match status" value="1"/>
</dbReference>
<dbReference type="HAMAP" id="MF_00531">
    <property type="entry name" value="Ribosomal_uS19"/>
    <property type="match status" value="1"/>
</dbReference>
<dbReference type="InterPro" id="IPR002222">
    <property type="entry name" value="Ribosomal_uS19"/>
</dbReference>
<dbReference type="InterPro" id="IPR005732">
    <property type="entry name" value="Ribosomal_uS19_bac-type"/>
</dbReference>
<dbReference type="InterPro" id="IPR020934">
    <property type="entry name" value="Ribosomal_uS19_CS"/>
</dbReference>
<dbReference type="InterPro" id="IPR023575">
    <property type="entry name" value="Ribosomal_uS19_SF"/>
</dbReference>
<dbReference type="NCBIfam" id="TIGR01050">
    <property type="entry name" value="rpsS_bact"/>
    <property type="match status" value="1"/>
</dbReference>
<dbReference type="PANTHER" id="PTHR11880">
    <property type="entry name" value="RIBOSOMAL PROTEIN S19P FAMILY MEMBER"/>
    <property type="match status" value="1"/>
</dbReference>
<dbReference type="PANTHER" id="PTHR11880:SF8">
    <property type="entry name" value="SMALL RIBOSOMAL SUBUNIT PROTEIN US19M"/>
    <property type="match status" value="1"/>
</dbReference>
<dbReference type="Pfam" id="PF00203">
    <property type="entry name" value="Ribosomal_S19"/>
    <property type="match status" value="1"/>
</dbReference>
<dbReference type="PIRSF" id="PIRSF002144">
    <property type="entry name" value="Ribosomal_S19"/>
    <property type="match status" value="1"/>
</dbReference>
<dbReference type="PRINTS" id="PR00975">
    <property type="entry name" value="RIBOSOMALS19"/>
</dbReference>
<dbReference type="SUPFAM" id="SSF54570">
    <property type="entry name" value="Ribosomal protein S19"/>
    <property type="match status" value="1"/>
</dbReference>
<dbReference type="PROSITE" id="PS00323">
    <property type="entry name" value="RIBOSOMAL_S19"/>
    <property type="match status" value="1"/>
</dbReference>
<name>RS19_RIPO1</name>
<evidence type="ECO:0000255" key="1">
    <source>
        <dbReference type="HAMAP-Rule" id="MF_00531"/>
    </source>
</evidence>
<evidence type="ECO:0000305" key="2"/>
<accession>B7K331</accession>
<gene>
    <name evidence="1" type="primary">rpsS</name>
    <name evidence="1" type="synonym">rps19</name>
    <name type="ordered locus">PCC8801_0248</name>
</gene>
<feature type="chain" id="PRO_1000127960" description="Small ribosomal subunit protein uS19">
    <location>
        <begin position="1"/>
        <end position="92"/>
    </location>
</feature>
<organism>
    <name type="scientific">Rippkaea orientalis (strain PCC 8801 / RF-1)</name>
    <name type="common">Cyanothece sp. (strain PCC 8801)</name>
    <dbReference type="NCBI Taxonomy" id="41431"/>
    <lineage>
        <taxon>Bacteria</taxon>
        <taxon>Bacillati</taxon>
        <taxon>Cyanobacteriota</taxon>
        <taxon>Cyanophyceae</taxon>
        <taxon>Oscillatoriophycideae</taxon>
        <taxon>Chroococcales</taxon>
        <taxon>Aphanothecaceae</taxon>
        <taxon>Rippkaea</taxon>
        <taxon>Rippkaea orientalis</taxon>
    </lineage>
</organism>
<keyword id="KW-1185">Reference proteome</keyword>
<keyword id="KW-0687">Ribonucleoprotein</keyword>
<keyword id="KW-0689">Ribosomal protein</keyword>
<keyword id="KW-0694">RNA-binding</keyword>
<keyword id="KW-0699">rRNA-binding</keyword>
<protein>
    <recommendedName>
        <fullName evidence="1">Small ribosomal subunit protein uS19</fullName>
    </recommendedName>
    <alternativeName>
        <fullName evidence="2">30S ribosomal protein S19</fullName>
    </alternativeName>
</protein>
<comment type="function">
    <text evidence="1">Protein S19 forms a complex with S13 that binds strongly to the 16S ribosomal RNA.</text>
</comment>
<comment type="similarity">
    <text evidence="1">Belongs to the universal ribosomal protein uS19 family.</text>
</comment>